<feature type="signal peptide" evidence="1">
    <location>
        <begin position="1"/>
        <end position="22"/>
    </location>
</feature>
<feature type="chain" id="PRO_0000278534" description="Uncharacterized lipoprotein SAR0444">
    <location>
        <begin position="23"/>
        <end position="264"/>
    </location>
</feature>
<feature type="lipid moiety-binding region" description="N-palmitoyl cysteine" evidence="1">
    <location>
        <position position="23"/>
    </location>
</feature>
<feature type="lipid moiety-binding region" description="S-diacylglycerol cysteine" evidence="1">
    <location>
        <position position="23"/>
    </location>
</feature>
<sequence length="264" mass="30721">MKSIKRIGLCISLLILIIFVTSCDGDNKITGDSKEEQIKKSFAKTLEMYPIKNLEDLYDKEGYRDGEFKKGDKGTWVIRSEMKIQLKGENLESRGVVLEINRNTRTAKGNYIVREVVEDSDGMTHNHTKRYPVKMENNKIIPLKQIVDEKVKKEIEEFKFFVQYGNFKELENYKDGEVTYNPEAPIYSAQYQLKNSDYNVEQLRKRYNIPTQKAPKLLLKGSGNLKGSSVGYKNIEFTFVENKGENIYFTDSVYFNPSEDKYNY</sequence>
<proteinExistence type="inferred from homology"/>
<protein>
    <recommendedName>
        <fullName>Uncharacterized lipoprotein SAR0444</fullName>
    </recommendedName>
</protein>
<keyword id="KW-1003">Cell membrane</keyword>
<keyword id="KW-0449">Lipoprotein</keyword>
<keyword id="KW-0472">Membrane</keyword>
<keyword id="KW-0564">Palmitate</keyword>
<keyword id="KW-0732">Signal</keyword>
<gene>
    <name type="ordered locus">SAR0444</name>
</gene>
<evidence type="ECO:0000255" key="1">
    <source>
        <dbReference type="PROSITE-ProRule" id="PRU00303"/>
    </source>
</evidence>
<evidence type="ECO:0000305" key="2"/>
<organism>
    <name type="scientific">Staphylococcus aureus (strain MRSA252)</name>
    <dbReference type="NCBI Taxonomy" id="282458"/>
    <lineage>
        <taxon>Bacteria</taxon>
        <taxon>Bacillati</taxon>
        <taxon>Bacillota</taxon>
        <taxon>Bacilli</taxon>
        <taxon>Bacillales</taxon>
        <taxon>Staphylococcaceae</taxon>
        <taxon>Staphylococcus</taxon>
    </lineage>
</organism>
<accession>Q6GJM9</accession>
<comment type="subcellular location">
    <subcellularLocation>
        <location evidence="1">Cell membrane</location>
        <topology evidence="1">Lipid-anchor</topology>
    </subcellularLocation>
</comment>
<comment type="similarity">
    <text evidence="2">Belongs to the staphylococcal tandem lipoprotein family.</text>
</comment>
<reference key="1">
    <citation type="journal article" date="2004" name="Proc. Natl. Acad. Sci. U.S.A.">
        <title>Complete genomes of two clinical Staphylococcus aureus strains: evidence for the rapid evolution of virulence and drug resistance.</title>
        <authorList>
            <person name="Holden M.T.G."/>
            <person name="Feil E.J."/>
            <person name="Lindsay J.A."/>
            <person name="Peacock S.J."/>
            <person name="Day N.P.J."/>
            <person name="Enright M.C."/>
            <person name="Foster T.J."/>
            <person name="Moore C.E."/>
            <person name="Hurst L."/>
            <person name="Atkin R."/>
            <person name="Barron A."/>
            <person name="Bason N."/>
            <person name="Bentley S.D."/>
            <person name="Chillingworth C."/>
            <person name="Chillingworth T."/>
            <person name="Churcher C."/>
            <person name="Clark L."/>
            <person name="Corton C."/>
            <person name="Cronin A."/>
            <person name="Doggett J."/>
            <person name="Dowd L."/>
            <person name="Feltwell T."/>
            <person name="Hance Z."/>
            <person name="Harris B."/>
            <person name="Hauser H."/>
            <person name="Holroyd S."/>
            <person name="Jagels K."/>
            <person name="James K.D."/>
            <person name="Lennard N."/>
            <person name="Line A."/>
            <person name="Mayes R."/>
            <person name="Moule S."/>
            <person name="Mungall K."/>
            <person name="Ormond D."/>
            <person name="Quail M.A."/>
            <person name="Rabbinowitsch E."/>
            <person name="Rutherford K.M."/>
            <person name="Sanders M."/>
            <person name="Sharp S."/>
            <person name="Simmonds M."/>
            <person name="Stevens K."/>
            <person name="Whitehead S."/>
            <person name="Barrell B.G."/>
            <person name="Spratt B.G."/>
            <person name="Parkhill J."/>
        </authorList>
    </citation>
    <scope>NUCLEOTIDE SEQUENCE [LARGE SCALE GENOMIC DNA]</scope>
    <source>
        <strain>MRSA252</strain>
    </source>
</reference>
<name>Y444_STAAR</name>
<dbReference type="EMBL" id="BX571856">
    <property type="protein sequence ID" value="CAG39464.1"/>
    <property type="molecule type" value="Genomic_DNA"/>
</dbReference>
<dbReference type="RefSeq" id="WP_000835979.1">
    <property type="nucleotide sequence ID" value="NC_002952.2"/>
</dbReference>
<dbReference type="SMR" id="Q6GJM9"/>
<dbReference type="KEGG" id="sar:SAR0444"/>
<dbReference type="HOGENOM" id="CLU_071589_0_1_9"/>
<dbReference type="Proteomes" id="UP000000596">
    <property type="component" value="Chromosome"/>
</dbReference>
<dbReference type="GO" id="GO:0005886">
    <property type="term" value="C:plasma membrane"/>
    <property type="evidence" value="ECO:0007669"/>
    <property type="project" value="UniProtKB-SubCell"/>
</dbReference>
<dbReference type="Gene3D" id="2.50.20.40">
    <property type="match status" value="1"/>
</dbReference>
<dbReference type="InterPro" id="IPR007595">
    <property type="entry name" value="Csa"/>
</dbReference>
<dbReference type="InterPro" id="IPR038641">
    <property type="entry name" value="Csa_sf"/>
</dbReference>
<dbReference type="NCBIfam" id="TIGR01742">
    <property type="entry name" value="SA_tandem_lipo"/>
    <property type="match status" value="1"/>
</dbReference>
<dbReference type="Pfam" id="PF04507">
    <property type="entry name" value="DUF576"/>
    <property type="match status" value="1"/>
</dbReference>
<dbReference type="PROSITE" id="PS51257">
    <property type="entry name" value="PROKAR_LIPOPROTEIN"/>
    <property type="match status" value="1"/>
</dbReference>